<dbReference type="EMBL" id="AAFI02000044">
    <property type="protein sequence ID" value="EAL66460.1"/>
    <property type="molecule type" value="Genomic_DNA"/>
</dbReference>
<dbReference type="RefSeq" id="XP_640414.1">
    <property type="nucleotide sequence ID" value="XM_635322.1"/>
</dbReference>
<dbReference type="PaxDb" id="44689-DDB0218348"/>
<dbReference type="EnsemblProtists" id="EAL66460">
    <property type="protein sequence ID" value="EAL66460"/>
    <property type="gene ID" value="DDB_G0282077"/>
</dbReference>
<dbReference type="GeneID" id="8623369"/>
<dbReference type="KEGG" id="ddi:DDB_G0282077"/>
<dbReference type="dictyBase" id="DDB_G0282077"/>
<dbReference type="InParanoid" id="Q54T37"/>
<dbReference type="PRO" id="PR:Q54T37"/>
<dbReference type="Proteomes" id="UP000002195">
    <property type="component" value="Chromosome 3"/>
</dbReference>
<feature type="signal peptide" evidence="1">
    <location>
        <begin position="1"/>
        <end position="19"/>
    </location>
</feature>
<feature type="chain" id="PRO_0000351259" description="Uncharacterized protein DDB_G0282077">
    <location>
        <begin position="20"/>
        <end position="189"/>
    </location>
</feature>
<feature type="region of interest" description="Disordered" evidence="2">
    <location>
        <begin position="24"/>
        <end position="189"/>
    </location>
</feature>
<feature type="compositionally biased region" description="Low complexity" evidence="2">
    <location>
        <begin position="25"/>
        <end position="69"/>
    </location>
</feature>
<feature type="compositionally biased region" description="Gly residues" evidence="2">
    <location>
        <begin position="70"/>
        <end position="101"/>
    </location>
</feature>
<feature type="compositionally biased region" description="Low complexity" evidence="2">
    <location>
        <begin position="102"/>
        <end position="142"/>
    </location>
</feature>
<feature type="compositionally biased region" description="Polar residues" evidence="2">
    <location>
        <begin position="144"/>
        <end position="157"/>
    </location>
</feature>
<feature type="compositionally biased region" description="Gly residues" evidence="2">
    <location>
        <begin position="165"/>
        <end position="183"/>
    </location>
</feature>
<gene>
    <name type="ORF">DDB_G0282077</name>
</gene>
<keyword id="KW-1185">Reference proteome</keyword>
<keyword id="KW-0732">Signal</keyword>
<protein>
    <recommendedName>
        <fullName>Uncharacterized protein DDB_G0282077</fullName>
    </recommendedName>
</protein>
<organism>
    <name type="scientific">Dictyostelium discoideum</name>
    <name type="common">Social amoeba</name>
    <dbReference type="NCBI Taxonomy" id="44689"/>
    <lineage>
        <taxon>Eukaryota</taxon>
        <taxon>Amoebozoa</taxon>
        <taxon>Evosea</taxon>
        <taxon>Eumycetozoa</taxon>
        <taxon>Dictyostelia</taxon>
        <taxon>Dictyosteliales</taxon>
        <taxon>Dictyosteliaceae</taxon>
        <taxon>Dictyostelium</taxon>
    </lineage>
</organism>
<accession>Q54T37</accession>
<reference key="1">
    <citation type="journal article" date="2005" name="Nature">
        <title>The genome of the social amoeba Dictyostelium discoideum.</title>
        <authorList>
            <person name="Eichinger L."/>
            <person name="Pachebat J.A."/>
            <person name="Gloeckner G."/>
            <person name="Rajandream M.A."/>
            <person name="Sucgang R."/>
            <person name="Berriman M."/>
            <person name="Song J."/>
            <person name="Olsen R."/>
            <person name="Szafranski K."/>
            <person name="Xu Q."/>
            <person name="Tunggal B."/>
            <person name="Kummerfeld S."/>
            <person name="Madera M."/>
            <person name="Konfortov B.A."/>
            <person name="Rivero F."/>
            <person name="Bankier A.T."/>
            <person name="Lehmann R."/>
            <person name="Hamlin N."/>
            <person name="Davies R."/>
            <person name="Gaudet P."/>
            <person name="Fey P."/>
            <person name="Pilcher K."/>
            <person name="Chen G."/>
            <person name="Saunders D."/>
            <person name="Sodergren E.J."/>
            <person name="Davis P."/>
            <person name="Kerhornou A."/>
            <person name="Nie X."/>
            <person name="Hall N."/>
            <person name="Anjard C."/>
            <person name="Hemphill L."/>
            <person name="Bason N."/>
            <person name="Farbrother P."/>
            <person name="Desany B."/>
            <person name="Just E."/>
            <person name="Morio T."/>
            <person name="Rost R."/>
            <person name="Churcher C.M."/>
            <person name="Cooper J."/>
            <person name="Haydock S."/>
            <person name="van Driessche N."/>
            <person name="Cronin A."/>
            <person name="Goodhead I."/>
            <person name="Muzny D.M."/>
            <person name="Mourier T."/>
            <person name="Pain A."/>
            <person name="Lu M."/>
            <person name="Harper D."/>
            <person name="Lindsay R."/>
            <person name="Hauser H."/>
            <person name="James K.D."/>
            <person name="Quiles M."/>
            <person name="Madan Babu M."/>
            <person name="Saito T."/>
            <person name="Buchrieser C."/>
            <person name="Wardroper A."/>
            <person name="Felder M."/>
            <person name="Thangavelu M."/>
            <person name="Johnson D."/>
            <person name="Knights A."/>
            <person name="Loulseged H."/>
            <person name="Mungall K.L."/>
            <person name="Oliver K."/>
            <person name="Price C."/>
            <person name="Quail M.A."/>
            <person name="Urushihara H."/>
            <person name="Hernandez J."/>
            <person name="Rabbinowitsch E."/>
            <person name="Steffen D."/>
            <person name="Sanders M."/>
            <person name="Ma J."/>
            <person name="Kohara Y."/>
            <person name="Sharp S."/>
            <person name="Simmonds M.N."/>
            <person name="Spiegler S."/>
            <person name="Tivey A."/>
            <person name="Sugano S."/>
            <person name="White B."/>
            <person name="Walker D."/>
            <person name="Woodward J.R."/>
            <person name="Winckler T."/>
            <person name="Tanaka Y."/>
            <person name="Shaulsky G."/>
            <person name="Schleicher M."/>
            <person name="Weinstock G.M."/>
            <person name="Rosenthal A."/>
            <person name="Cox E.C."/>
            <person name="Chisholm R.L."/>
            <person name="Gibbs R.A."/>
            <person name="Loomis W.F."/>
            <person name="Platzer M."/>
            <person name="Kay R.R."/>
            <person name="Williams J.G."/>
            <person name="Dear P.H."/>
            <person name="Noegel A.A."/>
            <person name="Barrell B.G."/>
            <person name="Kuspa A."/>
        </authorList>
    </citation>
    <scope>NUCLEOTIDE SEQUENCE [LARGE SCALE GENOMIC DNA]</scope>
    <source>
        <strain>AX4</strain>
    </source>
</reference>
<sequence>MNKLTILFLILALISVIYAQHKFPSSSEDSSSNDSNSQVTGSQSYSGSQSDSNSGSESHTINTGSSYSGSGSGSSGISGGSGSGSGSGSGSGSGSGSGSGAVSGSQSGSGAVSGSQSGSGAVSGSQSGVQTGSQSGAGSASGAFTGNPSGSQSQEINTGSSYSGSGSGAPTGAATGSGSGSGSSGTVYY</sequence>
<evidence type="ECO:0000255" key="1"/>
<evidence type="ECO:0000256" key="2">
    <source>
        <dbReference type="SAM" id="MobiDB-lite"/>
    </source>
</evidence>
<proteinExistence type="inferred from homology"/>
<name>Y8348_DICDI</name>